<protein>
    <recommendedName>
        <fullName>Lysozyme C</fullName>
        <ecNumber>3.2.1.17</ecNumber>
    </recommendedName>
    <alternativeName>
        <fullName>1,4-beta-N-acetylmuramidase C</fullName>
    </alternativeName>
</protein>
<organism>
    <name type="scientific">Chelonia mydas</name>
    <name type="common">Green sea-turtle</name>
    <name type="synonym">Chelonia agassizi</name>
    <dbReference type="NCBI Taxonomy" id="8469"/>
    <lineage>
        <taxon>Eukaryota</taxon>
        <taxon>Metazoa</taxon>
        <taxon>Chordata</taxon>
        <taxon>Craniata</taxon>
        <taxon>Vertebrata</taxon>
        <taxon>Euteleostomi</taxon>
        <taxon>Archelosauria</taxon>
        <taxon>Testudinata</taxon>
        <taxon>Testudines</taxon>
        <taxon>Cryptodira</taxon>
        <taxon>Durocryptodira</taxon>
        <taxon>Americhelydia</taxon>
        <taxon>Chelonioidea</taxon>
        <taxon>Cheloniidae</taxon>
        <taxon>Chelonia</taxon>
    </lineage>
</organism>
<feature type="chain" id="PRO_0000247815" description="Lysozyme C">
    <location>
        <begin position="1"/>
        <end position="130"/>
    </location>
</feature>
<feature type="domain" description="C-type lysozyme" evidence="2">
    <location>
        <begin position="1"/>
        <end position="130"/>
    </location>
</feature>
<feature type="active site" evidence="2">
    <location>
        <position position="35"/>
    </location>
</feature>
<feature type="active site" evidence="2">
    <location>
        <position position="53"/>
    </location>
</feature>
<feature type="disulfide bond" evidence="2">
    <location>
        <begin position="6"/>
        <end position="128"/>
    </location>
</feature>
<feature type="disulfide bond" evidence="2">
    <location>
        <begin position="30"/>
        <end position="116"/>
    </location>
</feature>
<feature type="disulfide bond" evidence="2">
    <location>
        <begin position="65"/>
        <end position="81"/>
    </location>
</feature>
<feature type="disulfide bond" evidence="2">
    <location>
        <begin position="77"/>
        <end position="95"/>
    </location>
</feature>
<comment type="function">
    <text evidence="2">Lysozymes have primarily a bacteriolytic function; those in tissues and body fluids are associated with the monocyte-macrophage system and enhance the activity of immunoagents.</text>
</comment>
<comment type="catalytic activity">
    <reaction>
        <text>Hydrolysis of (1-&gt;4)-beta-linkages between N-acetylmuramic acid and N-acetyl-D-glucosamine residues in a peptidoglycan and between N-acetyl-D-glucosamine residues in chitodextrins.</text>
        <dbReference type="EC" id="3.2.1.17"/>
    </reaction>
</comment>
<comment type="subunit">
    <text evidence="1">Monomer.</text>
</comment>
<comment type="subcellular location">
    <subcellularLocation>
        <location>Secreted</location>
    </subcellularLocation>
</comment>
<comment type="miscellaneous">
    <text>Lysozyme C is capable of both hydrolysis and transglycosylation; it also shows a slight esterase activity. It acts rapidly on both peptide-substituted and unsubstituted peptidoglycan, and slowly on chitin oligosaccharides.</text>
</comment>
<comment type="similarity">
    <text evidence="2">Belongs to the glycosyl hydrolase 22 family.</text>
</comment>
<evidence type="ECO:0000250" key="1"/>
<evidence type="ECO:0000255" key="2">
    <source>
        <dbReference type="PROSITE-ProRule" id="PRU00680"/>
    </source>
</evidence>
<proteinExistence type="evidence at protein level"/>
<reference key="1">
    <citation type="submission" date="2003-03" db="PIR data bank">
        <authorList>
            <person name="Araki T."/>
            <person name="Chijiiwa Y."/>
            <person name="Okabayashi K."/>
            <person name="Kawase M."/>
            <person name="Kamesaki M."/>
            <person name="Torikata T."/>
        </authorList>
    </citation>
    <scope>PROTEIN SEQUENCE</scope>
</reference>
<dbReference type="EC" id="3.2.1.17"/>
<dbReference type="PIR" id="JC7918">
    <property type="entry name" value="JC7918"/>
</dbReference>
<dbReference type="SMR" id="P84492"/>
<dbReference type="eggNOG" id="ENOG502RZU4">
    <property type="taxonomic scope" value="Eukaryota"/>
</dbReference>
<dbReference type="GO" id="GO:0005576">
    <property type="term" value="C:extracellular region"/>
    <property type="evidence" value="ECO:0007669"/>
    <property type="project" value="UniProtKB-SubCell"/>
</dbReference>
<dbReference type="GO" id="GO:0003796">
    <property type="term" value="F:lysozyme activity"/>
    <property type="evidence" value="ECO:0007669"/>
    <property type="project" value="UniProtKB-EC"/>
</dbReference>
<dbReference type="GO" id="GO:0050829">
    <property type="term" value="P:defense response to Gram-negative bacterium"/>
    <property type="evidence" value="ECO:0007669"/>
    <property type="project" value="TreeGrafter"/>
</dbReference>
<dbReference type="GO" id="GO:0050830">
    <property type="term" value="P:defense response to Gram-positive bacterium"/>
    <property type="evidence" value="ECO:0007669"/>
    <property type="project" value="TreeGrafter"/>
</dbReference>
<dbReference type="GO" id="GO:0031640">
    <property type="term" value="P:killing of cells of another organism"/>
    <property type="evidence" value="ECO:0007669"/>
    <property type="project" value="UniProtKB-KW"/>
</dbReference>
<dbReference type="CDD" id="cd16897">
    <property type="entry name" value="LYZ_C"/>
    <property type="match status" value="1"/>
</dbReference>
<dbReference type="FunFam" id="1.10.530.10:FF:000001">
    <property type="entry name" value="Lysozyme C"/>
    <property type="match status" value="1"/>
</dbReference>
<dbReference type="Gene3D" id="1.10.530.10">
    <property type="match status" value="1"/>
</dbReference>
<dbReference type="InterPro" id="IPR001916">
    <property type="entry name" value="Glyco_hydro_22"/>
</dbReference>
<dbReference type="InterPro" id="IPR019799">
    <property type="entry name" value="Glyco_hydro_22_CS"/>
</dbReference>
<dbReference type="InterPro" id="IPR000974">
    <property type="entry name" value="Glyco_hydro_22_lys"/>
</dbReference>
<dbReference type="InterPro" id="IPR023346">
    <property type="entry name" value="Lysozyme-like_dom_sf"/>
</dbReference>
<dbReference type="PANTHER" id="PTHR11407">
    <property type="entry name" value="LYSOZYME C"/>
    <property type="match status" value="1"/>
</dbReference>
<dbReference type="PANTHER" id="PTHR11407:SF28">
    <property type="entry name" value="LYSOZYME C"/>
    <property type="match status" value="1"/>
</dbReference>
<dbReference type="Pfam" id="PF00062">
    <property type="entry name" value="Lys"/>
    <property type="match status" value="1"/>
</dbReference>
<dbReference type="PRINTS" id="PR00137">
    <property type="entry name" value="LYSOZYME"/>
</dbReference>
<dbReference type="PRINTS" id="PR00135">
    <property type="entry name" value="LYZLACT"/>
</dbReference>
<dbReference type="SMART" id="SM00263">
    <property type="entry name" value="LYZ1"/>
    <property type="match status" value="1"/>
</dbReference>
<dbReference type="SUPFAM" id="SSF53955">
    <property type="entry name" value="Lysozyme-like"/>
    <property type="match status" value="1"/>
</dbReference>
<dbReference type="PROSITE" id="PS00128">
    <property type="entry name" value="GLYCOSYL_HYDROL_F22_1"/>
    <property type="match status" value="1"/>
</dbReference>
<dbReference type="PROSITE" id="PS51348">
    <property type="entry name" value="GLYCOSYL_HYDROL_F22_2"/>
    <property type="match status" value="1"/>
</dbReference>
<gene>
    <name type="primary">LYZ</name>
</gene>
<keyword id="KW-0929">Antimicrobial</keyword>
<keyword id="KW-0081">Bacteriolytic enzyme</keyword>
<keyword id="KW-0903">Direct protein sequencing</keyword>
<keyword id="KW-1015">Disulfide bond</keyword>
<keyword id="KW-0326">Glycosidase</keyword>
<keyword id="KW-0378">Hydrolase</keyword>
<keyword id="KW-0964">Secreted</keyword>
<sequence>KTYERCELARAMKRLGLDGYWGYSLGHWVCAAKYESNFNTGATNYNPGDQSTDYGILQINSRWWCNDGKTPRTKNACKIQCRELLTADITASVNCAKRVVRDPNGMGAWVAWTKNCKGRDVSPWIRDCGL</sequence>
<accession>P84492</accession>
<name>LYSC_CHEMY</name>